<protein>
    <recommendedName>
        <fullName evidence="1">Nucleotide-binding protein MCCL_0516</fullName>
    </recommendedName>
</protein>
<gene>
    <name type="ordered locus">MCCL_0516</name>
</gene>
<accession>B9EAG2</accession>
<feature type="chain" id="PRO_1000147363" description="Nucleotide-binding protein MCCL_0516">
    <location>
        <begin position="1"/>
        <end position="300"/>
    </location>
</feature>
<feature type="binding site" evidence="1">
    <location>
        <begin position="15"/>
        <end position="22"/>
    </location>
    <ligand>
        <name>ATP</name>
        <dbReference type="ChEBI" id="CHEBI:30616"/>
    </ligand>
</feature>
<feature type="binding site" evidence="1">
    <location>
        <begin position="66"/>
        <end position="69"/>
    </location>
    <ligand>
        <name>GTP</name>
        <dbReference type="ChEBI" id="CHEBI:37565"/>
    </ligand>
</feature>
<reference key="1">
    <citation type="journal article" date="2009" name="J. Bacteriol.">
        <title>Complete genome sequence of Macrococcus caseolyticus strain JCSCS5402, reflecting the ancestral genome of the human-pathogenic staphylococci.</title>
        <authorList>
            <person name="Baba T."/>
            <person name="Kuwahara-Arai K."/>
            <person name="Uchiyama I."/>
            <person name="Takeuchi F."/>
            <person name="Ito T."/>
            <person name="Hiramatsu K."/>
        </authorList>
    </citation>
    <scope>NUCLEOTIDE SEQUENCE [LARGE SCALE GENOMIC DNA]</scope>
    <source>
        <strain>JCSC5402</strain>
    </source>
</reference>
<comment type="function">
    <text evidence="1">Displays ATPase and GTPase activities.</text>
</comment>
<comment type="similarity">
    <text evidence="1">Belongs to the RapZ-like family.</text>
</comment>
<dbReference type="EMBL" id="AP009484">
    <property type="protein sequence ID" value="BAH17223.1"/>
    <property type="molecule type" value="Genomic_DNA"/>
</dbReference>
<dbReference type="RefSeq" id="WP_012656424.1">
    <property type="nucleotide sequence ID" value="NC_011999.1"/>
</dbReference>
<dbReference type="SMR" id="B9EAG2"/>
<dbReference type="STRING" id="458233.MCCL_0516"/>
<dbReference type="KEGG" id="mcl:MCCL_0516"/>
<dbReference type="eggNOG" id="COG1660">
    <property type="taxonomic scope" value="Bacteria"/>
</dbReference>
<dbReference type="HOGENOM" id="CLU_059558_0_0_9"/>
<dbReference type="OrthoDB" id="9784461at2"/>
<dbReference type="Proteomes" id="UP000001383">
    <property type="component" value="Chromosome"/>
</dbReference>
<dbReference type="GO" id="GO:0005524">
    <property type="term" value="F:ATP binding"/>
    <property type="evidence" value="ECO:0007669"/>
    <property type="project" value="UniProtKB-UniRule"/>
</dbReference>
<dbReference type="GO" id="GO:0005525">
    <property type="term" value="F:GTP binding"/>
    <property type="evidence" value="ECO:0007669"/>
    <property type="project" value="UniProtKB-UniRule"/>
</dbReference>
<dbReference type="HAMAP" id="MF_00636">
    <property type="entry name" value="RapZ_like"/>
    <property type="match status" value="1"/>
</dbReference>
<dbReference type="InterPro" id="IPR027417">
    <property type="entry name" value="P-loop_NTPase"/>
</dbReference>
<dbReference type="InterPro" id="IPR005337">
    <property type="entry name" value="RapZ-like"/>
</dbReference>
<dbReference type="InterPro" id="IPR053930">
    <property type="entry name" value="RapZ-like_N"/>
</dbReference>
<dbReference type="InterPro" id="IPR053931">
    <property type="entry name" value="RapZ_C"/>
</dbReference>
<dbReference type="NCBIfam" id="NF003828">
    <property type="entry name" value="PRK05416.1"/>
    <property type="match status" value="1"/>
</dbReference>
<dbReference type="PANTHER" id="PTHR30448">
    <property type="entry name" value="RNASE ADAPTER PROTEIN RAPZ"/>
    <property type="match status" value="1"/>
</dbReference>
<dbReference type="PANTHER" id="PTHR30448:SF0">
    <property type="entry name" value="RNASE ADAPTER PROTEIN RAPZ"/>
    <property type="match status" value="1"/>
</dbReference>
<dbReference type="Pfam" id="PF22740">
    <property type="entry name" value="PapZ_C"/>
    <property type="match status" value="1"/>
</dbReference>
<dbReference type="Pfam" id="PF03668">
    <property type="entry name" value="RapZ-like_N"/>
    <property type="match status" value="1"/>
</dbReference>
<dbReference type="PIRSF" id="PIRSF005052">
    <property type="entry name" value="P-loopkin"/>
    <property type="match status" value="1"/>
</dbReference>
<dbReference type="SUPFAM" id="SSF52540">
    <property type="entry name" value="P-loop containing nucleoside triphosphate hydrolases"/>
    <property type="match status" value="1"/>
</dbReference>
<keyword id="KW-0067">ATP-binding</keyword>
<keyword id="KW-0342">GTP-binding</keyword>
<keyword id="KW-0547">Nucleotide-binding</keyword>
<keyword id="KW-1185">Reference proteome</keyword>
<proteinExistence type="inferred from homology"/>
<organism>
    <name type="scientific">Macrococcus caseolyticus (strain JCSC5402)</name>
    <name type="common">Macrococcoides caseolyticum</name>
    <dbReference type="NCBI Taxonomy" id="458233"/>
    <lineage>
        <taxon>Bacteria</taxon>
        <taxon>Bacillati</taxon>
        <taxon>Bacillota</taxon>
        <taxon>Bacilli</taxon>
        <taxon>Bacillales</taxon>
        <taxon>Staphylococcaceae</taxon>
        <taxon>Macrococcoides</taxon>
    </lineage>
</organism>
<evidence type="ECO:0000255" key="1">
    <source>
        <dbReference type="HAMAP-Rule" id="MF_00636"/>
    </source>
</evidence>
<name>Y516_MACCJ</name>
<sequence>MSNEDTYKRLVVVTGMSGAGKSVAIQCLEDLGYFCVDNLPPILLPKFIELMNNNTESLSRVAIGIDLRGKDFFNSLQEEIQNIINLNEVLVQVLFVEASDHILVSRYKETRRTHPLQDNISLIDAIQEERKLLADLRGVATHIIDSSESKPKALRSKVIEIFGSGKDNIFTINVMSFGFKHGLPIDADIVFDVRFLPNPYYIEEMRKLTGLDPLVYDYVMKWKETEMFYQKLIDLLKFVIPGYMREGKSQVVIAIGCTGGQHRSVALSERISNELKDFFDFELHTRHRDALIEGTINEKA</sequence>